<evidence type="ECO:0000255" key="1"/>
<evidence type="ECO:0000255" key="2">
    <source>
        <dbReference type="PROSITE-ProRule" id="PRU00498"/>
    </source>
</evidence>
<evidence type="ECO:0000256" key="3">
    <source>
        <dbReference type="SAM" id="MobiDB-lite"/>
    </source>
</evidence>
<evidence type="ECO:0000269" key="4">
    <source>
    </source>
</evidence>
<evidence type="ECO:0000303" key="5">
    <source>
    </source>
</evidence>
<evidence type="ECO:0000305" key="6"/>
<comment type="function">
    <text evidence="4">MSB2 and SHO1 have overlapping functions in recognizing various surface signals for MAPK PMK1 activation and appressorium formation (PubMed:21283781). While MSB2 is critical for sensing surface hydrophobicity and cutin monomers, SHO1 may play a more important role in recognizing rice leaf waxes (PubMed:21283781).</text>
</comment>
<comment type="subcellular location">
    <subcellularLocation>
        <location evidence="4">Cell membrane</location>
        <topology evidence="1">Single-pass membrane protein</topology>
    </subcellularLocation>
    <subcellularLocation>
        <location evidence="4">Vacuole membrane</location>
        <topology evidence="1">Single-pass membrane protein</topology>
    </subcellularLocation>
    <text evidence="4">During conidium germination and appressorium formation, localizes at the cell membrane and in vacuoles (PubMed:21283781). In mature appressoria, mainly localized to vacuole-like structures (PubMed:21283781).</text>
</comment>
<comment type="induction">
    <text evidence="4">Expression is significantly reduced when PMK1 or MST12 are disrupted.</text>
</comment>
<comment type="domain">
    <text evidence="4">The extracellular serine/threonine rich region (STR) and the HKR11-MSB2 homology domain (HMH) are essential for MBS2 function, whereas the C-terminal cytoplasmic tail is dispensable for appressorium formation and virulence.</text>
</comment>
<comment type="disruption phenotype">
    <text evidence="4">Reduces significantly appressorium formation and virulence.</text>
</comment>
<comment type="similarity">
    <text evidence="6">Belongs to the HKR1/MSB2 family.</text>
</comment>
<feature type="signal peptide" evidence="1">
    <location>
        <begin position="1"/>
        <end position="20"/>
    </location>
</feature>
<feature type="chain" id="PRO_5003466018" description="Cell surface sensor MSB2">
    <location>
        <begin position="21"/>
        <end position="804"/>
    </location>
</feature>
<feature type="topological domain" description="Extracellular" evidence="1">
    <location>
        <begin position="21"/>
        <end position="694"/>
    </location>
</feature>
<feature type="transmembrane region" description="Helical" evidence="1">
    <location>
        <begin position="695"/>
        <end position="715"/>
    </location>
</feature>
<feature type="topological domain" description="Cytoplasmic" evidence="1">
    <location>
        <begin position="716"/>
        <end position="804"/>
    </location>
</feature>
<feature type="region of interest" description="Serine/threonine rich region (STR)" evidence="4">
    <location>
        <begin position="46"/>
        <end position="475"/>
    </location>
</feature>
<feature type="region of interest" description="Disordered" evidence="3">
    <location>
        <begin position="46"/>
        <end position="90"/>
    </location>
</feature>
<feature type="region of interest" description="Disordered" evidence="3">
    <location>
        <begin position="105"/>
        <end position="220"/>
    </location>
</feature>
<feature type="region of interest" description="Disordered" evidence="3">
    <location>
        <begin position="345"/>
        <end position="516"/>
    </location>
</feature>
<feature type="region of interest" description="HKR11-MSB2 homology domain (HMH)" evidence="4">
    <location>
        <begin position="482"/>
        <end position="641"/>
    </location>
</feature>
<feature type="region of interest" description="Disordered" evidence="3">
    <location>
        <begin position="658"/>
        <end position="689"/>
    </location>
</feature>
<feature type="region of interest" description="Disordered" evidence="3">
    <location>
        <begin position="724"/>
        <end position="748"/>
    </location>
</feature>
<feature type="region of interest" description="Disordered" evidence="3">
    <location>
        <begin position="762"/>
        <end position="804"/>
    </location>
</feature>
<feature type="compositionally biased region" description="Low complexity" evidence="3">
    <location>
        <begin position="46"/>
        <end position="58"/>
    </location>
</feature>
<feature type="compositionally biased region" description="Low complexity" evidence="3">
    <location>
        <begin position="69"/>
        <end position="80"/>
    </location>
</feature>
<feature type="compositionally biased region" description="Polar residues" evidence="3">
    <location>
        <begin position="81"/>
        <end position="90"/>
    </location>
</feature>
<feature type="compositionally biased region" description="Polar residues" evidence="3">
    <location>
        <begin position="109"/>
        <end position="126"/>
    </location>
</feature>
<feature type="compositionally biased region" description="Low complexity" evidence="3">
    <location>
        <begin position="128"/>
        <end position="143"/>
    </location>
</feature>
<feature type="compositionally biased region" description="Low complexity" evidence="3">
    <location>
        <begin position="150"/>
        <end position="169"/>
    </location>
</feature>
<feature type="compositionally biased region" description="Polar residues" evidence="3">
    <location>
        <begin position="170"/>
        <end position="188"/>
    </location>
</feature>
<feature type="compositionally biased region" description="Low complexity" evidence="3">
    <location>
        <begin position="189"/>
        <end position="202"/>
    </location>
</feature>
<feature type="compositionally biased region" description="Polar residues" evidence="3">
    <location>
        <begin position="345"/>
        <end position="394"/>
    </location>
</feature>
<feature type="compositionally biased region" description="Low complexity" evidence="3">
    <location>
        <begin position="395"/>
        <end position="407"/>
    </location>
</feature>
<feature type="compositionally biased region" description="Low complexity" evidence="3">
    <location>
        <begin position="427"/>
        <end position="476"/>
    </location>
</feature>
<feature type="compositionally biased region" description="Polar residues" evidence="3">
    <location>
        <begin position="493"/>
        <end position="508"/>
    </location>
</feature>
<feature type="compositionally biased region" description="Gly residues" evidence="3">
    <location>
        <begin position="660"/>
        <end position="671"/>
    </location>
</feature>
<feature type="compositionally biased region" description="Low complexity" evidence="3">
    <location>
        <begin position="672"/>
        <end position="686"/>
    </location>
</feature>
<feature type="compositionally biased region" description="Polar residues" evidence="3">
    <location>
        <begin position="731"/>
        <end position="744"/>
    </location>
</feature>
<feature type="compositionally biased region" description="Low complexity" evidence="3">
    <location>
        <begin position="774"/>
        <end position="787"/>
    </location>
</feature>
<feature type="glycosylation site" description="N-linked (GlcNAc...) asparagine" evidence="2">
    <location>
        <position position="45"/>
    </location>
</feature>
<feature type="glycosylation site" description="N-linked (GlcNAc...) asparagine" evidence="2">
    <location>
        <position position="157"/>
    </location>
</feature>
<feature type="glycosylation site" description="N-linked (GlcNAc...) asparagine" evidence="2">
    <location>
        <position position="298"/>
    </location>
</feature>
<feature type="glycosylation site" description="N-linked (GlcNAc...) asparagine" evidence="2">
    <location>
        <position position="308"/>
    </location>
</feature>
<feature type="glycosylation site" description="N-linked (GlcNAc...) asparagine" evidence="2">
    <location>
        <position position="357"/>
    </location>
</feature>
<feature type="glycosylation site" description="N-linked (GlcNAc...) asparagine" evidence="2">
    <location>
        <position position="393"/>
    </location>
</feature>
<feature type="glycosylation site" description="N-linked (GlcNAc...) asparagine" evidence="2">
    <location>
        <position position="427"/>
    </location>
</feature>
<feature type="glycosylation site" description="N-linked (GlcNAc...) asparagine" evidence="2">
    <location>
        <position position="433"/>
    </location>
</feature>
<feature type="glycosylation site" description="N-linked (GlcNAc...) asparagine" evidence="2">
    <location>
        <position position="629"/>
    </location>
</feature>
<feature type="glycosylation site" description="N-linked (GlcNAc...) asparagine" evidence="2">
    <location>
        <position position="638"/>
    </location>
</feature>
<feature type="glycosylation site" description="N-linked (GlcNAc...) asparagine" evidence="2">
    <location>
        <position position="669"/>
    </location>
</feature>
<feature type="glycosylation site" description="N-linked (GlcNAc...) asparagine" evidence="2">
    <location>
        <position position="683"/>
    </location>
</feature>
<feature type="glycosylation site" description="N-linked (GlcNAc...) asparagine" evidence="2">
    <location>
        <position position="686"/>
    </location>
</feature>
<reference key="1">
    <citation type="journal article" date="2005" name="Nature">
        <title>The genome sequence of the rice blast fungus Magnaporthe grisea.</title>
        <authorList>
            <person name="Dean R.A."/>
            <person name="Talbot N.J."/>
            <person name="Ebbole D.J."/>
            <person name="Farman M.L."/>
            <person name="Mitchell T.K."/>
            <person name="Orbach M.J."/>
            <person name="Thon M.R."/>
            <person name="Kulkarni R."/>
            <person name="Xu J.-R."/>
            <person name="Pan H."/>
            <person name="Read N.D."/>
            <person name="Lee Y.-H."/>
            <person name="Carbone I."/>
            <person name="Brown D."/>
            <person name="Oh Y.Y."/>
            <person name="Donofrio N."/>
            <person name="Jeong J.S."/>
            <person name="Soanes D.M."/>
            <person name="Djonovic S."/>
            <person name="Kolomiets E."/>
            <person name="Rehmeyer C."/>
            <person name="Li W."/>
            <person name="Harding M."/>
            <person name="Kim S."/>
            <person name="Lebrun M.-H."/>
            <person name="Bohnert H."/>
            <person name="Coughlan S."/>
            <person name="Butler J."/>
            <person name="Calvo S.E."/>
            <person name="Ma L.-J."/>
            <person name="Nicol R."/>
            <person name="Purcell S."/>
            <person name="Nusbaum C."/>
            <person name="Galagan J.E."/>
            <person name="Birren B.W."/>
        </authorList>
    </citation>
    <scope>NUCLEOTIDE SEQUENCE [LARGE SCALE GENOMIC DNA]</scope>
    <source>
        <strain>70-15 / ATCC MYA-4617 / FGSC 8958</strain>
    </source>
</reference>
<reference key="2">
    <citation type="journal article" date="2011" name="PLoS Pathog.">
        <title>Multiple plant surface signals are sensed by different mechanisms in the rice blast fungus for appressorium formation.</title>
        <authorList>
            <person name="Liu W."/>
            <person name="Zhou X."/>
            <person name="Li G."/>
            <person name="Li L."/>
            <person name="Kong L."/>
            <person name="Wang C."/>
            <person name="Zhang H."/>
            <person name="Xu J.R."/>
        </authorList>
    </citation>
    <scope>FUNCTION</scope>
    <scope>INDUCTION</scope>
    <scope>DISRUPTION PHENOTYPE</scope>
    <scope>SUBCELLULAR LOCATION</scope>
    <scope>DOMAIN</scope>
</reference>
<dbReference type="EMBL" id="CM001233">
    <property type="protein sequence ID" value="EHA52075.1"/>
    <property type="molecule type" value="Genomic_DNA"/>
</dbReference>
<dbReference type="RefSeq" id="XP_003711882.1">
    <property type="nucleotide sequence ID" value="XM_003711834.1"/>
</dbReference>
<dbReference type="SMR" id="G4N4W3"/>
<dbReference type="STRING" id="242507.G4N4W3"/>
<dbReference type="GlyCosmos" id="G4N4W3">
    <property type="glycosylation" value="13 sites, No reported glycans"/>
</dbReference>
<dbReference type="EnsemblFungi" id="MGG_06033T0">
    <property type="protein sequence ID" value="MGG_06033T0"/>
    <property type="gene ID" value="MGG_06033"/>
</dbReference>
<dbReference type="GeneID" id="2683942"/>
<dbReference type="KEGG" id="mgr:MGG_06033"/>
<dbReference type="VEuPathDB" id="FungiDB:MGG_06033"/>
<dbReference type="eggNOG" id="ENOG502QW7T">
    <property type="taxonomic scope" value="Eukaryota"/>
</dbReference>
<dbReference type="HOGENOM" id="CLU_008998_1_0_1"/>
<dbReference type="InParanoid" id="G4N4W3"/>
<dbReference type="OMA" id="SGRNQMI"/>
<dbReference type="OrthoDB" id="3366093at2759"/>
<dbReference type="PHI-base" id="PHI:2046"/>
<dbReference type="PHI-base" id="PHI:2159"/>
<dbReference type="Proteomes" id="UP000009058">
    <property type="component" value="Chromosome 3"/>
</dbReference>
<dbReference type="GO" id="GO:0009986">
    <property type="term" value="C:cell surface"/>
    <property type="evidence" value="ECO:0007669"/>
    <property type="project" value="TreeGrafter"/>
</dbReference>
<dbReference type="GO" id="GO:0005576">
    <property type="term" value="C:extracellular region"/>
    <property type="evidence" value="ECO:0007669"/>
    <property type="project" value="TreeGrafter"/>
</dbReference>
<dbReference type="GO" id="GO:0005886">
    <property type="term" value="C:plasma membrane"/>
    <property type="evidence" value="ECO:0007669"/>
    <property type="project" value="UniProtKB-SubCell"/>
</dbReference>
<dbReference type="GO" id="GO:0030427">
    <property type="term" value="C:site of polarized growth"/>
    <property type="evidence" value="ECO:0007669"/>
    <property type="project" value="TreeGrafter"/>
</dbReference>
<dbReference type="GO" id="GO:0005774">
    <property type="term" value="C:vacuolar membrane"/>
    <property type="evidence" value="ECO:0007669"/>
    <property type="project" value="UniProtKB-SubCell"/>
</dbReference>
<dbReference type="GO" id="GO:0005034">
    <property type="term" value="F:osmosensor activity"/>
    <property type="evidence" value="ECO:0007669"/>
    <property type="project" value="InterPro"/>
</dbReference>
<dbReference type="GO" id="GO:0030010">
    <property type="term" value="P:establishment of cell polarity"/>
    <property type="evidence" value="ECO:0007669"/>
    <property type="project" value="TreeGrafter"/>
</dbReference>
<dbReference type="GO" id="GO:0031505">
    <property type="term" value="P:fungal-type cell wall organization"/>
    <property type="evidence" value="ECO:0007669"/>
    <property type="project" value="TreeGrafter"/>
</dbReference>
<dbReference type="GO" id="GO:0006972">
    <property type="term" value="P:hyperosmotic response"/>
    <property type="evidence" value="ECO:0007669"/>
    <property type="project" value="TreeGrafter"/>
</dbReference>
<dbReference type="GO" id="GO:0007232">
    <property type="term" value="P:osmosensory signaling pathway via Sho1 osmosensor"/>
    <property type="evidence" value="ECO:0007669"/>
    <property type="project" value="InterPro"/>
</dbReference>
<dbReference type="GO" id="GO:0001402">
    <property type="term" value="P:signal transduction involved in filamentous growth"/>
    <property type="evidence" value="ECO:0007669"/>
    <property type="project" value="TreeGrafter"/>
</dbReference>
<dbReference type="InterPro" id="IPR039295">
    <property type="entry name" value="MSB2"/>
</dbReference>
<dbReference type="PANTHER" id="PTHR35778">
    <property type="entry name" value="SIGNALING MUCIN HKR1-RELATED"/>
    <property type="match status" value="1"/>
</dbReference>
<dbReference type="PANTHER" id="PTHR35778:SF1">
    <property type="entry name" value="SIGNALING MUCIN HKR1-RELATED"/>
    <property type="match status" value="1"/>
</dbReference>
<dbReference type="PRINTS" id="PR01217">
    <property type="entry name" value="PRICHEXTENSN"/>
</dbReference>
<gene>
    <name evidence="5" type="primary">MSB2</name>
    <name type="ORF">MGG_06033</name>
</gene>
<proteinExistence type="evidence at transcript level"/>
<name>MSB2_PYRO7</name>
<accession>G4N4W3</accession>
<keyword id="KW-1003">Cell membrane</keyword>
<keyword id="KW-0325">Glycoprotein</keyword>
<keyword id="KW-0472">Membrane</keyword>
<keyword id="KW-1185">Reference proteome</keyword>
<keyword id="KW-0732">Signal</keyword>
<keyword id="KW-0812">Transmembrane</keyword>
<keyword id="KW-1133">Transmembrane helix</keyword>
<keyword id="KW-0926">Vacuole</keyword>
<keyword id="KW-0843">Virulence</keyword>
<sequence length="804" mass="81847">MHNFSKLAVAFVAAASFASAEPETKAKVERPIIYFPRHIKRQFANTTTPASEASSSTSRPPPIPVPETSSFSSSASSSSAQELTASRQPTSIDEFFSTLSDALTTDSTPFSQRPATSGAGRSSATGDVTPIIVPSSASPPSTAVKPGSVSALTTSQNSTSAATSESVTSPGSTSGPAGTPESSSASDFTSAVATSRASTATSNTGLIPETTILPTTATSNTGLIPETTILPTTASLSTAESAVTPSITSSASSSGILIAPTGVVTPTSSSSTEDPVFDGIGTLISSIVSSVSTVLQPNGTAPVTTTPNTSVDVATTPVDIASTTASDTLSPTTAVVSTTGPVTSVQTLPPVSTPTANGTVTSPPVDSQTTVLPTTTPGLSSDTIVTSPGVTANSTQVPTTVPTTIPTTQPPVTEPTITPTVLPPSPNNTVPSNTTTQLPPTQAPTLTQLPTTTTSPALTTPATTPSVAPTSATSSANSNDDWLPTTIIVQAPLPSTTGSSTNAPSSAPTVLPSDLPKIINPSDDITEPLGPDMMEIQVAFKFALNYRFITNENPNAGAQIFEYLPKSLKYMEGLTEEQKKRLQVLRVVPLNTEQQLGYVTSVAIATWPKAFFPQLRLDVKTPFSQFYQNTSNGMLAHNLTMLVNPAIDILPGATLDGKPAGAGSGTGGNGSNGPNDVFNNDNNSTNQSATQRGTVAGIAFGAVSLAAAYGAAMFIVARRYKKKRQAHRRSSSVATPSEMRQSGSPALMGGALLSRDFTHYGGVMGPAGGRESHGSNGSGRSAGNSARTAGISAPVAQENSLGWN</sequence>
<organism>
    <name type="scientific">Pyricularia oryzae (strain 70-15 / ATCC MYA-4617 / FGSC 8958)</name>
    <name type="common">Rice blast fungus</name>
    <name type="synonym">Magnaporthe oryzae</name>
    <dbReference type="NCBI Taxonomy" id="242507"/>
    <lineage>
        <taxon>Eukaryota</taxon>
        <taxon>Fungi</taxon>
        <taxon>Dikarya</taxon>
        <taxon>Ascomycota</taxon>
        <taxon>Pezizomycotina</taxon>
        <taxon>Sordariomycetes</taxon>
        <taxon>Sordariomycetidae</taxon>
        <taxon>Magnaporthales</taxon>
        <taxon>Pyriculariaceae</taxon>
        <taxon>Pyricularia</taxon>
    </lineage>
</organism>
<protein>
    <recommendedName>
        <fullName evidence="5">Cell surface sensor MSB2</fullName>
    </recommendedName>
</protein>